<evidence type="ECO:0000255" key="1">
    <source>
        <dbReference type="HAMAP-Rule" id="MF_01584"/>
    </source>
</evidence>
<proteinExistence type="inferred from homology"/>
<sequence length="216" mass="23893">MSSEHDTPGEALRLSSTDIRILGSLIEKQATSPETYPLTLNALVIACNQKTSREPVMNLTQGQVGQSLRALEARGFTRLVMGSRADRWEQRLDKALELVPAQLILCGLMFLRGPQTVNELLTRSGRMHDFEDSEQVLHQLERLIARGLALHIPRQAGQREDRYTHALGDPADIEAILAARSNPVERSAGGAVSVERIEELEARIAALEERLAQLEG</sequence>
<name>Y4004_PSEF5</name>
<gene>
    <name type="ordered locus">PFL_4004</name>
</gene>
<dbReference type="EMBL" id="CP000076">
    <property type="protein sequence ID" value="AAY93265.1"/>
    <property type="molecule type" value="Genomic_DNA"/>
</dbReference>
<dbReference type="RefSeq" id="WP_011062288.1">
    <property type="nucleotide sequence ID" value="NC_004129.6"/>
</dbReference>
<dbReference type="SMR" id="Q4K9I2"/>
<dbReference type="KEGG" id="pfl:PFL_4004"/>
<dbReference type="PATRIC" id="fig|220664.5.peg.4099"/>
<dbReference type="eggNOG" id="COG3132">
    <property type="taxonomic scope" value="Bacteria"/>
</dbReference>
<dbReference type="HOGENOM" id="CLU_057831_2_0_6"/>
<dbReference type="Proteomes" id="UP000008540">
    <property type="component" value="Chromosome"/>
</dbReference>
<dbReference type="Gene3D" id="1.10.10.10">
    <property type="entry name" value="Winged helix-like DNA-binding domain superfamily/Winged helix DNA-binding domain"/>
    <property type="match status" value="2"/>
</dbReference>
<dbReference type="HAMAP" id="MF_01584">
    <property type="entry name" value="UPF0502"/>
    <property type="match status" value="1"/>
</dbReference>
<dbReference type="InterPro" id="IPR007432">
    <property type="entry name" value="DUF480"/>
</dbReference>
<dbReference type="InterPro" id="IPR036388">
    <property type="entry name" value="WH-like_DNA-bd_sf"/>
</dbReference>
<dbReference type="InterPro" id="IPR036390">
    <property type="entry name" value="WH_DNA-bd_sf"/>
</dbReference>
<dbReference type="PANTHER" id="PTHR38768">
    <property type="entry name" value="UPF0502 PROTEIN YCEH"/>
    <property type="match status" value="1"/>
</dbReference>
<dbReference type="PANTHER" id="PTHR38768:SF1">
    <property type="entry name" value="UPF0502 PROTEIN YCEH"/>
    <property type="match status" value="1"/>
</dbReference>
<dbReference type="Pfam" id="PF04337">
    <property type="entry name" value="DUF480"/>
    <property type="match status" value="1"/>
</dbReference>
<dbReference type="SUPFAM" id="SSF46785">
    <property type="entry name" value="Winged helix' DNA-binding domain"/>
    <property type="match status" value="2"/>
</dbReference>
<comment type="similarity">
    <text evidence="1">Belongs to the UPF0502 family.</text>
</comment>
<organism>
    <name type="scientific">Pseudomonas fluorescens (strain ATCC BAA-477 / NRRL B-23932 / Pf-5)</name>
    <dbReference type="NCBI Taxonomy" id="220664"/>
    <lineage>
        <taxon>Bacteria</taxon>
        <taxon>Pseudomonadati</taxon>
        <taxon>Pseudomonadota</taxon>
        <taxon>Gammaproteobacteria</taxon>
        <taxon>Pseudomonadales</taxon>
        <taxon>Pseudomonadaceae</taxon>
        <taxon>Pseudomonas</taxon>
    </lineage>
</organism>
<protein>
    <recommendedName>
        <fullName evidence="1">UPF0502 protein PFL_4004</fullName>
    </recommendedName>
</protein>
<feature type="chain" id="PRO_0000309405" description="UPF0502 protein PFL_4004">
    <location>
        <begin position="1"/>
        <end position="216"/>
    </location>
</feature>
<reference key="1">
    <citation type="journal article" date="2005" name="Nat. Biotechnol.">
        <title>Complete genome sequence of the plant commensal Pseudomonas fluorescens Pf-5.</title>
        <authorList>
            <person name="Paulsen I.T."/>
            <person name="Press C.M."/>
            <person name="Ravel J."/>
            <person name="Kobayashi D.Y."/>
            <person name="Myers G.S.A."/>
            <person name="Mavrodi D.V."/>
            <person name="DeBoy R.T."/>
            <person name="Seshadri R."/>
            <person name="Ren Q."/>
            <person name="Madupu R."/>
            <person name="Dodson R.J."/>
            <person name="Durkin A.S."/>
            <person name="Brinkac L.M."/>
            <person name="Daugherty S.C."/>
            <person name="Sullivan S.A."/>
            <person name="Rosovitz M.J."/>
            <person name="Gwinn M.L."/>
            <person name="Zhou L."/>
            <person name="Schneider D.J."/>
            <person name="Cartinhour S.W."/>
            <person name="Nelson W.C."/>
            <person name="Weidman J."/>
            <person name="Watkins K."/>
            <person name="Tran K."/>
            <person name="Khouri H."/>
            <person name="Pierson E.A."/>
            <person name="Pierson L.S. III"/>
            <person name="Thomashow L.S."/>
            <person name="Loper J.E."/>
        </authorList>
    </citation>
    <scope>NUCLEOTIDE SEQUENCE [LARGE SCALE GENOMIC DNA]</scope>
    <source>
        <strain>ATCC BAA-477 / NRRL B-23932 / Pf-5</strain>
    </source>
</reference>
<accession>Q4K9I2</accession>